<feature type="chain" id="PRO_0000218031" description="Protease">
    <location>
        <begin position="1"/>
        <end position="214"/>
    </location>
</feature>
<feature type="active site" evidence="1">
    <location>
        <position position="54"/>
    </location>
</feature>
<feature type="active site" evidence="1">
    <location>
        <position position="71"/>
    </location>
</feature>
<feature type="active site" evidence="1">
    <location>
        <position position="122"/>
    </location>
</feature>
<feature type="site" description="Cleavage; by autolysis" evidence="1">
    <location>
        <begin position="51"/>
        <end position="52"/>
    </location>
</feature>
<feature type="disulfide bond" description="Interchain (with C-10 in cleaved protease cofactor pVI-C)" evidence="1">
    <location>
        <position position="104"/>
    </location>
</feature>
<protein>
    <recommendedName>
        <fullName evidence="1">Protease</fullName>
        <ecNumber evidence="1">3.4.22.39</ecNumber>
    </recommendedName>
    <alternativeName>
        <fullName evidence="1">Adenain</fullName>
    </alternativeName>
    <alternativeName>
        <fullName evidence="1">Adenovirus protease</fullName>
        <shortName evidence="1">AVP</shortName>
    </alternativeName>
    <alternativeName>
        <fullName evidence="1">Adenovirus proteinase</fullName>
    </alternativeName>
    <alternativeName>
        <fullName evidence="1">Endoprotease</fullName>
    </alternativeName>
</protein>
<gene>
    <name evidence="1" type="primary">L3</name>
</gene>
<name>PRO_ADE41</name>
<sequence length="214" mass="24482">MGSSEQELVAIARDLGCGSYFLGTFDKRFPGFMAPNKLACAIVNTAGRETGGVHWLALAWNPKSHTCYLFDPFGFSDERLKQIYQFEYEGLLKRSALASTPDHCITLVKSTQTVQGPFSAACGLFCCMFLHAFIHWPSNPMEQNPTMDLLTGVPNSMLQSPQVEPTLRRNQERLYRFLTQHSPYFRRHRERIEKATAFDQMKNAQVLFHNKIFY</sequence>
<comment type="function">
    <text evidence="1">Cleaves viral precursor proteins (pTP, pIIIa, pVI, pVII, pVIII, and pX) inside newly assembled particles giving rise to mature virions. Protease complexed to its cofactor slides along the viral DNA to specifically locate and cleave the viral precursors. Mature virions have a weakened organization compared to the unmature virions, thereby facilitating subsequent uncoating. Without maturation, the particle lacks infectivity and is unable to uncoat. Late in adenovirus infection, in the cytoplasm, may participate in the cytoskeleton destruction. Cleaves host cell cytoskeletal keratins K7 and K18.</text>
</comment>
<comment type="catalytic activity">
    <reaction evidence="1">
        <text>Cleaves proteins of the adenovirus and its host cell at two consensus sites: -Yaa-Xaa-Gly-Gly-|-Xaa- and -Yaa-Xaa-Gly-Xaa-|-Gly- (in which Yaa is Met, Ile or Leu, and Xaa is any amino acid).</text>
        <dbReference type="EC" id="3.4.22.39"/>
    </reaction>
</comment>
<comment type="activity regulation">
    <text evidence="1">Requires DNA and protease cofactor for maximal activation. Inside nascent virions, becomes partially activated by binding to the viral DNA, allowing it to cleave the cofactor that binds to the protease and fully activates it. Actin, like the viral protease cofactor, seems to act as a cofactor in the cleavage of cytokeratin 18 and of actin itself.</text>
</comment>
<comment type="subunit">
    <text evidence="1">Interacts with protease cofactor pVI-C; this interaction is necessary for protease activation.</text>
</comment>
<comment type="subcellular location">
    <subcellularLocation>
        <location evidence="1">Virion</location>
    </subcellularLocation>
    <subcellularLocation>
        <location evidence="1">Host nucleus</location>
    </subcellularLocation>
    <text evidence="1">Present in about 10 copies per virion.</text>
</comment>
<comment type="induction">
    <text evidence="1">Expressed in the late phase of the viral replicative cycle.</text>
</comment>
<comment type="miscellaneous">
    <text evidence="1">All late proteins expressed from the major late promoter are produced by alternative splicing and alternative polyadenylation of the same gene giving rise to non-overlapping ORFs. A leader sequence is present in the N-terminus of all these mRNAs and is recognized by the viral shutoff protein to provide expression although conventional translation via ribosome scanning from the cap has been shut off in the host cell.</text>
</comment>
<comment type="similarity">
    <text evidence="1">Belongs to the peptidase C5 family.</text>
</comment>
<reference key="1">
    <citation type="journal article" date="1988" name="Virology">
        <title>The genes encoding the DNA binding protein and the 23K protease of adenovirus types 40 and 41.</title>
        <authorList>
            <person name="Vos H.L."/>
            <person name="der Lee F.M."/>
            <person name="Reemst A.M.C.B."/>
            <person name="van Loon A.E."/>
            <person name="Sussenbach J.S."/>
        </authorList>
    </citation>
    <scope>NUCLEOTIDE SEQUENCE [GENOMIC DNA]</scope>
</reference>
<reference key="2">
    <citation type="submission" date="1990-02" db="EMBL/GenBank/DDBJ databases">
        <authorList>
            <person name="Toogood C.I.A."/>
            <person name="Murali R."/>
            <person name="Burnett M."/>
            <person name="Hay R.T."/>
        </authorList>
    </citation>
    <scope>NUCLEOTIDE SEQUENCE [GENOMIC DNA] OF 1-198</scope>
    <source>
        <strain>Tak</strain>
    </source>
</reference>
<keyword id="KW-0068">Autocatalytic cleavage</keyword>
<keyword id="KW-1015">Disulfide bond</keyword>
<keyword id="KW-0238">DNA-binding</keyword>
<keyword id="KW-1048">Host nucleus</keyword>
<keyword id="KW-0378">Hydrolase</keyword>
<keyword id="KW-0426">Late protein</keyword>
<keyword id="KW-0645">Protease</keyword>
<keyword id="KW-0788">Thiol protease</keyword>
<keyword id="KW-0946">Virion</keyword>
<accession>P11826</accession>
<evidence type="ECO:0000255" key="1">
    <source>
        <dbReference type="HAMAP-Rule" id="MF_04059"/>
    </source>
</evidence>
<organismHost>
    <name type="scientific">Homo sapiens</name>
    <name type="common">Human</name>
    <dbReference type="NCBI Taxonomy" id="9606"/>
</organismHost>
<dbReference type="EC" id="3.4.22.39" evidence="1"/>
<dbReference type="EMBL" id="AH002308">
    <property type="protein sequence ID" value="AAA42462.1"/>
    <property type="molecule type" value="Genomic_DNA"/>
</dbReference>
<dbReference type="EMBL" id="X51783">
    <property type="protein sequence ID" value="CAA36080.1"/>
    <property type="molecule type" value="Genomic_DNA"/>
</dbReference>
<dbReference type="PIR" id="E28645">
    <property type="entry name" value="W2AD41"/>
</dbReference>
<dbReference type="SMR" id="P11826"/>
<dbReference type="MEROPS" id="C05.001"/>
<dbReference type="GO" id="GO:0042025">
    <property type="term" value="C:host cell nucleus"/>
    <property type="evidence" value="ECO:0007669"/>
    <property type="project" value="UniProtKB-SubCell"/>
</dbReference>
<dbReference type="GO" id="GO:0044423">
    <property type="term" value="C:virion component"/>
    <property type="evidence" value="ECO:0007669"/>
    <property type="project" value="UniProtKB-UniRule"/>
</dbReference>
<dbReference type="GO" id="GO:0004197">
    <property type="term" value="F:cysteine-type endopeptidase activity"/>
    <property type="evidence" value="ECO:0007669"/>
    <property type="project" value="UniProtKB-UniRule"/>
</dbReference>
<dbReference type="GO" id="GO:0003677">
    <property type="term" value="F:DNA binding"/>
    <property type="evidence" value="ECO:0007669"/>
    <property type="project" value="UniProtKB-UniRule"/>
</dbReference>
<dbReference type="GO" id="GO:0006508">
    <property type="term" value="P:proteolysis"/>
    <property type="evidence" value="ECO:0007669"/>
    <property type="project" value="UniProtKB-KW"/>
</dbReference>
<dbReference type="Gene3D" id="3.40.395.10">
    <property type="entry name" value="Adenoviral Proteinase, Chain A"/>
    <property type="match status" value="1"/>
</dbReference>
<dbReference type="HAMAP" id="MF_04059">
    <property type="entry name" value="ADV_PRO"/>
    <property type="match status" value="1"/>
</dbReference>
<dbReference type="InterPro" id="IPR038765">
    <property type="entry name" value="Papain-like_cys_pep_sf"/>
</dbReference>
<dbReference type="InterPro" id="IPR000855">
    <property type="entry name" value="Peptidase_C5"/>
</dbReference>
<dbReference type="Pfam" id="PF00770">
    <property type="entry name" value="Peptidase_C5"/>
    <property type="match status" value="1"/>
</dbReference>
<dbReference type="PIRSF" id="PIRSF001218">
    <property type="entry name" value="Protease_ADV"/>
    <property type="match status" value="1"/>
</dbReference>
<dbReference type="PRINTS" id="PR00703">
    <property type="entry name" value="ADVENDOPTASE"/>
</dbReference>
<dbReference type="SUPFAM" id="SSF54001">
    <property type="entry name" value="Cysteine proteinases"/>
    <property type="match status" value="1"/>
</dbReference>
<organism>
    <name type="scientific">Human adenovirus F serotype 41</name>
    <name type="common">HAdV-41</name>
    <name type="synonym">Human adenovirus 41</name>
    <dbReference type="NCBI Taxonomy" id="10524"/>
    <lineage>
        <taxon>Viruses</taxon>
        <taxon>Varidnaviria</taxon>
        <taxon>Bamfordvirae</taxon>
        <taxon>Preplasmiviricota</taxon>
        <taxon>Tectiliviricetes</taxon>
        <taxon>Rowavirales</taxon>
        <taxon>Adenoviridae</taxon>
        <taxon>Mastadenovirus</taxon>
        <taxon>Human mastadenovirus F</taxon>
    </lineage>
</organism>
<proteinExistence type="inferred from homology"/>